<reference key="1">
    <citation type="journal article" date="2006" name="Genome Res.">
        <title>Massive genome erosion and functional adaptations provide insights into the symbiotic lifestyle of Sodalis glossinidius in the tsetse host.</title>
        <authorList>
            <person name="Toh H."/>
            <person name="Weiss B.L."/>
            <person name="Perkin S.A.H."/>
            <person name="Yamashita A."/>
            <person name="Oshima K."/>
            <person name="Hattori M."/>
            <person name="Aksoy S."/>
        </authorList>
    </citation>
    <scope>NUCLEOTIDE SEQUENCE [LARGE SCALE GENOMIC DNA]</scope>
    <source>
        <strain>morsitans</strain>
    </source>
</reference>
<protein>
    <recommendedName>
        <fullName evidence="1">Undecaprenyl phosphate-alpha-4-amino-4-deoxy-L-arabinose arabinosyl transferase 2</fullName>
        <ecNumber evidence="1">2.4.2.43</ecNumber>
    </recommendedName>
    <alternativeName>
        <fullName evidence="1">4-amino-4-deoxy-L-arabinose lipid A transferase 2</fullName>
    </alternativeName>
    <alternativeName>
        <fullName evidence="1">Lipid IV(A) 4-amino-4-deoxy-L-arabinosyltransferase</fullName>
    </alternativeName>
    <alternativeName>
        <fullName evidence="1">Undecaprenyl phosphate-alpha-L-Ara4N transferase 2</fullName>
    </alternativeName>
</protein>
<comment type="function">
    <text evidence="1">Catalyzes the transfer of the L-Ara4N moiety of the glycolipid undecaprenyl phosphate-alpha-L-Ara4N to lipid A. The modified arabinose is attached to lipid A and is required for resistance to polymyxin and cationic antimicrobial peptides.</text>
</comment>
<comment type="catalytic activity">
    <reaction evidence="1">
        <text>4-amino-4-deoxy-alpha-L-arabinopyranosyl di-trans,octa-cis-undecaprenyl phosphate + lipid IVA = lipid IIA + di-trans,octa-cis-undecaprenyl phosphate.</text>
        <dbReference type="EC" id="2.4.2.43"/>
    </reaction>
</comment>
<comment type="pathway">
    <text evidence="1">Lipopolysaccharide metabolism; 4-amino-4-deoxy-beta-L-arabinose-lipid A biosynthesis.</text>
</comment>
<comment type="subcellular location">
    <subcellularLocation>
        <location evidence="1">Cell inner membrane</location>
        <topology evidence="1">Multi-pass membrane protein</topology>
    </subcellularLocation>
</comment>
<comment type="similarity">
    <text evidence="1">Belongs to the glycosyltransferase 83 family.</text>
</comment>
<dbReference type="EC" id="2.4.2.43" evidence="1"/>
<dbReference type="EMBL" id="AP008232">
    <property type="protein sequence ID" value="BAE75116.1"/>
    <property type="molecule type" value="Genomic_DNA"/>
</dbReference>
<dbReference type="RefSeq" id="WP_011411788.1">
    <property type="nucleotide sequence ID" value="NC_007712.1"/>
</dbReference>
<dbReference type="SMR" id="Q2NRV9"/>
<dbReference type="STRING" id="343509.SG1841"/>
<dbReference type="CAZy" id="GT83">
    <property type="family name" value="Glycosyltransferase Family 83"/>
</dbReference>
<dbReference type="KEGG" id="sgl:SG1841"/>
<dbReference type="eggNOG" id="COG1807">
    <property type="taxonomic scope" value="Bacteria"/>
</dbReference>
<dbReference type="HOGENOM" id="CLU_019200_2_1_6"/>
<dbReference type="OrthoDB" id="9775035at2"/>
<dbReference type="BioCyc" id="SGLO343509:SGP1_RS16675-MONOMER"/>
<dbReference type="UniPathway" id="UPA00037"/>
<dbReference type="Proteomes" id="UP000001932">
    <property type="component" value="Chromosome"/>
</dbReference>
<dbReference type="GO" id="GO:0005886">
    <property type="term" value="C:plasma membrane"/>
    <property type="evidence" value="ECO:0007669"/>
    <property type="project" value="UniProtKB-SubCell"/>
</dbReference>
<dbReference type="GO" id="GO:0103015">
    <property type="term" value="F:4-amino-4-deoxy-L-arabinose transferase activity"/>
    <property type="evidence" value="ECO:0007669"/>
    <property type="project" value="UniProtKB-EC"/>
</dbReference>
<dbReference type="GO" id="GO:0000030">
    <property type="term" value="F:mannosyltransferase activity"/>
    <property type="evidence" value="ECO:0007669"/>
    <property type="project" value="InterPro"/>
</dbReference>
<dbReference type="GO" id="GO:0009245">
    <property type="term" value="P:lipid A biosynthetic process"/>
    <property type="evidence" value="ECO:0007669"/>
    <property type="project" value="UniProtKB-UniRule"/>
</dbReference>
<dbReference type="GO" id="GO:0009103">
    <property type="term" value="P:lipopolysaccharide biosynthetic process"/>
    <property type="evidence" value="ECO:0007669"/>
    <property type="project" value="UniProtKB-KW"/>
</dbReference>
<dbReference type="GO" id="GO:0006493">
    <property type="term" value="P:protein O-linked glycosylation"/>
    <property type="evidence" value="ECO:0007669"/>
    <property type="project" value="InterPro"/>
</dbReference>
<dbReference type="GO" id="GO:0010041">
    <property type="term" value="P:response to iron(III) ion"/>
    <property type="evidence" value="ECO:0007669"/>
    <property type="project" value="TreeGrafter"/>
</dbReference>
<dbReference type="HAMAP" id="MF_01165">
    <property type="entry name" value="ArnT_transfer"/>
    <property type="match status" value="1"/>
</dbReference>
<dbReference type="InterPro" id="IPR022839">
    <property type="entry name" value="ArnT_tfrase"/>
</dbReference>
<dbReference type="InterPro" id="IPR003342">
    <property type="entry name" value="Glyco_trans_39/83"/>
</dbReference>
<dbReference type="InterPro" id="IPR050297">
    <property type="entry name" value="LipidA_mod_glycosyltrf_83"/>
</dbReference>
<dbReference type="NCBIfam" id="NF009784">
    <property type="entry name" value="PRK13279.1"/>
    <property type="match status" value="1"/>
</dbReference>
<dbReference type="PANTHER" id="PTHR33908">
    <property type="entry name" value="MANNOSYLTRANSFERASE YKCB-RELATED"/>
    <property type="match status" value="1"/>
</dbReference>
<dbReference type="PANTHER" id="PTHR33908:SF3">
    <property type="entry name" value="UNDECAPRENYL PHOSPHATE-ALPHA-4-AMINO-4-DEOXY-L-ARABINOSE ARABINOSYL TRANSFERASE"/>
    <property type="match status" value="1"/>
</dbReference>
<dbReference type="Pfam" id="PF02366">
    <property type="entry name" value="PMT"/>
    <property type="match status" value="1"/>
</dbReference>
<sequence length="550" mass="61716">MKSLKPGIGLMCIIALYYLLPLSFRSLWQPDETRYAEISREMLASGDWIVPHFLGLRYFEKPSVGYWINNLSQWAFGHTNFAVHFGSAFSIALTALMVYWLALRLWQDRWLGLTAAAIYSSCLLVYSIGTYAVLDPMIALWLAAAMCAFWQAVQAPRGWRKGLGYLALGIACGLGFMTKGFLALAVPVLSVLPWVIAQKRWKEVFIYGPLALLGAVATSLPWVIAIARREPDFWHYFIWVEHVQRFAEDNAQHKAPFWYYLPVLLAGTLPWLGLLPGALRRAWRERQTQSGAFYLLGWVVMPLLFFSLSKGKLPTYILPSFAPLALLMARYAATCGGRALKVNGVLNLLFGLLCVITVASVLAPWGLAQHPLFVQNEVRKVLLGVLGFLVWAAVGGLTLRAPTVCWRWAALCPLGIALLVGQAIPQQVIDAKQPQSFIQTVRPQLEKSRFIFANSVGVAAGLAWELQRSDISLFELQGELAYGLSYPDAADRFIREEDFSDWLRERCKEGSVALVVLLPDGETQISHLPRADETYRRGRLVLLAYHQRRP</sequence>
<keyword id="KW-0997">Cell inner membrane</keyword>
<keyword id="KW-1003">Cell membrane</keyword>
<keyword id="KW-0328">Glycosyltransferase</keyword>
<keyword id="KW-0441">Lipid A biosynthesis</keyword>
<keyword id="KW-0444">Lipid biosynthesis</keyword>
<keyword id="KW-0443">Lipid metabolism</keyword>
<keyword id="KW-0448">Lipopolysaccharide biosynthesis</keyword>
<keyword id="KW-0472">Membrane</keyword>
<keyword id="KW-0808">Transferase</keyword>
<keyword id="KW-0812">Transmembrane</keyword>
<keyword id="KW-1133">Transmembrane helix</keyword>
<gene>
    <name evidence="1" type="primary">arnT2</name>
    <name type="ordered locus">SG1841</name>
</gene>
<feature type="chain" id="PRO_0000380042" description="Undecaprenyl phosphate-alpha-4-amino-4-deoxy-L-arabinose arabinosyl transferase 2">
    <location>
        <begin position="1"/>
        <end position="550"/>
    </location>
</feature>
<feature type="transmembrane region" description="Helical" evidence="1">
    <location>
        <begin position="4"/>
        <end position="24"/>
    </location>
</feature>
<feature type="transmembrane region" description="Helical" evidence="1">
    <location>
        <begin position="81"/>
        <end position="101"/>
    </location>
</feature>
<feature type="transmembrane region" description="Helical" evidence="1">
    <location>
        <begin position="110"/>
        <end position="132"/>
    </location>
</feature>
<feature type="transmembrane region" description="Helical" evidence="1">
    <location>
        <begin position="176"/>
        <end position="196"/>
    </location>
</feature>
<feature type="transmembrane region" description="Helical" evidence="1">
    <location>
        <begin position="204"/>
        <end position="224"/>
    </location>
</feature>
<feature type="transmembrane region" description="Helical" evidence="1">
    <location>
        <begin position="255"/>
        <end position="275"/>
    </location>
</feature>
<feature type="transmembrane region" description="Helical" evidence="1">
    <location>
        <begin position="288"/>
        <end position="308"/>
    </location>
</feature>
<feature type="transmembrane region" description="Helical" evidence="1">
    <location>
        <begin position="313"/>
        <end position="333"/>
    </location>
</feature>
<feature type="transmembrane region" description="Helical" evidence="1">
    <location>
        <begin position="348"/>
        <end position="368"/>
    </location>
</feature>
<feature type="transmembrane region" description="Helical" evidence="1">
    <location>
        <begin position="381"/>
        <end position="401"/>
    </location>
</feature>
<feature type="transmembrane region" description="Helical" evidence="1">
    <location>
        <begin position="409"/>
        <end position="429"/>
    </location>
</feature>
<organism>
    <name type="scientific">Sodalis glossinidius (strain morsitans)</name>
    <dbReference type="NCBI Taxonomy" id="343509"/>
    <lineage>
        <taxon>Bacteria</taxon>
        <taxon>Pseudomonadati</taxon>
        <taxon>Pseudomonadota</taxon>
        <taxon>Gammaproteobacteria</taxon>
        <taxon>Enterobacterales</taxon>
        <taxon>Bruguierivoracaceae</taxon>
        <taxon>Sodalis</taxon>
    </lineage>
</organism>
<proteinExistence type="inferred from homology"/>
<name>ARNT2_SODGM</name>
<evidence type="ECO:0000255" key="1">
    <source>
        <dbReference type="HAMAP-Rule" id="MF_01165"/>
    </source>
</evidence>
<accession>Q2NRV9</accession>